<reference key="1">
    <citation type="submission" date="2007-07" db="EMBL/GenBank/DDBJ databases">
        <title>Complete genome sequence of Campylobacter hominis ATCC BAA-381, a commensal isolated from the human gastrointestinal tract.</title>
        <authorList>
            <person name="Fouts D.E."/>
            <person name="Mongodin E.F."/>
            <person name="Puiu D."/>
            <person name="Sebastian Y."/>
            <person name="Miller W.G."/>
            <person name="Mandrell R.E."/>
            <person name="Nelson K.E."/>
        </authorList>
    </citation>
    <scope>NUCLEOTIDE SEQUENCE [LARGE SCALE GENOMIC DNA]</scope>
    <source>
        <strain>ATCC BAA-381 / DSM 21671 / CCUG 45161 / LMG 19568 / NCTC 13146 / CH001A</strain>
    </source>
</reference>
<sequence>MTKLGIHGGSGKMGTMIYECAQNFTNIEISAIYSIEPLKYSPNCIVTNDLQKLFENCDAVIDFTIKDGAIALLNYAKSHPKPICMGTTALGSEGEALLKECGKKMPVIYATNMSLGVAVLNSLTAQASKILRDFDCEIVEMHHRHKKDAPSGTAMTLAKTVANARGLDLEKVRISGRDGMIGERKKDEIAVMSLRGGDIVGRHSVGFYNDGEFIELNHTATSRATFANGAIKAALWVINQENGLYDINDCLGIKKCVR</sequence>
<evidence type="ECO:0000255" key="1">
    <source>
        <dbReference type="HAMAP-Rule" id="MF_00102"/>
    </source>
</evidence>
<evidence type="ECO:0000305" key="2"/>
<gene>
    <name evidence="1" type="primary">dapB</name>
    <name type="ordered locus">CHAB381_1358</name>
</gene>
<dbReference type="EC" id="1.17.1.8" evidence="1"/>
<dbReference type="EMBL" id="CP000776">
    <property type="protein sequence ID" value="ABS52172.1"/>
    <property type="molecule type" value="Genomic_DNA"/>
</dbReference>
<dbReference type="RefSeq" id="WP_012109210.1">
    <property type="nucleotide sequence ID" value="NC_009714.1"/>
</dbReference>
<dbReference type="SMR" id="A7I316"/>
<dbReference type="STRING" id="360107.CHAB381_1358"/>
<dbReference type="KEGG" id="cha:CHAB381_1358"/>
<dbReference type="eggNOG" id="COG0289">
    <property type="taxonomic scope" value="Bacteria"/>
</dbReference>
<dbReference type="HOGENOM" id="CLU_047479_2_2_7"/>
<dbReference type="OrthoDB" id="9790352at2"/>
<dbReference type="UniPathway" id="UPA00034">
    <property type="reaction ID" value="UER00018"/>
</dbReference>
<dbReference type="Proteomes" id="UP000002407">
    <property type="component" value="Chromosome"/>
</dbReference>
<dbReference type="GO" id="GO:0005829">
    <property type="term" value="C:cytosol"/>
    <property type="evidence" value="ECO:0007669"/>
    <property type="project" value="TreeGrafter"/>
</dbReference>
<dbReference type="GO" id="GO:0008839">
    <property type="term" value="F:4-hydroxy-tetrahydrodipicolinate reductase"/>
    <property type="evidence" value="ECO:0007669"/>
    <property type="project" value="UniProtKB-EC"/>
</dbReference>
<dbReference type="GO" id="GO:0051287">
    <property type="term" value="F:NAD binding"/>
    <property type="evidence" value="ECO:0007669"/>
    <property type="project" value="UniProtKB-UniRule"/>
</dbReference>
<dbReference type="GO" id="GO:0050661">
    <property type="term" value="F:NADP binding"/>
    <property type="evidence" value="ECO:0007669"/>
    <property type="project" value="UniProtKB-UniRule"/>
</dbReference>
<dbReference type="GO" id="GO:0016726">
    <property type="term" value="F:oxidoreductase activity, acting on CH or CH2 groups, NAD or NADP as acceptor"/>
    <property type="evidence" value="ECO:0007669"/>
    <property type="project" value="UniProtKB-UniRule"/>
</dbReference>
<dbReference type="GO" id="GO:0019877">
    <property type="term" value="P:diaminopimelate biosynthetic process"/>
    <property type="evidence" value="ECO:0007669"/>
    <property type="project" value="UniProtKB-UniRule"/>
</dbReference>
<dbReference type="GO" id="GO:0009089">
    <property type="term" value="P:lysine biosynthetic process via diaminopimelate"/>
    <property type="evidence" value="ECO:0007669"/>
    <property type="project" value="UniProtKB-UniRule"/>
</dbReference>
<dbReference type="CDD" id="cd02274">
    <property type="entry name" value="DHDPR_N"/>
    <property type="match status" value="1"/>
</dbReference>
<dbReference type="FunFam" id="3.30.360.10:FF:000004">
    <property type="entry name" value="4-hydroxy-tetrahydrodipicolinate reductase"/>
    <property type="match status" value="1"/>
</dbReference>
<dbReference type="Gene3D" id="3.30.360.10">
    <property type="entry name" value="Dihydrodipicolinate Reductase, domain 2"/>
    <property type="match status" value="1"/>
</dbReference>
<dbReference type="Gene3D" id="3.40.50.720">
    <property type="entry name" value="NAD(P)-binding Rossmann-like Domain"/>
    <property type="match status" value="1"/>
</dbReference>
<dbReference type="HAMAP" id="MF_00102">
    <property type="entry name" value="DapB"/>
    <property type="match status" value="1"/>
</dbReference>
<dbReference type="InterPro" id="IPR022663">
    <property type="entry name" value="DapB_C"/>
</dbReference>
<dbReference type="InterPro" id="IPR000846">
    <property type="entry name" value="DapB_N"/>
</dbReference>
<dbReference type="InterPro" id="IPR022664">
    <property type="entry name" value="DapB_N_CS"/>
</dbReference>
<dbReference type="InterPro" id="IPR023940">
    <property type="entry name" value="DHDPR_bac"/>
</dbReference>
<dbReference type="InterPro" id="IPR036291">
    <property type="entry name" value="NAD(P)-bd_dom_sf"/>
</dbReference>
<dbReference type="NCBIfam" id="TIGR00036">
    <property type="entry name" value="dapB"/>
    <property type="match status" value="1"/>
</dbReference>
<dbReference type="PANTHER" id="PTHR20836:SF0">
    <property type="entry name" value="4-HYDROXY-TETRAHYDRODIPICOLINATE REDUCTASE 1, CHLOROPLASTIC-RELATED"/>
    <property type="match status" value="1"/>
</dbReference>
<dbReference type="PANTHER" id="PTHR20836">
    <property type="entry name" value="DIHYDRODIPICOLINATE REDUCTASE"/>
    <property type="match status" value="1"/>
</dbReference>
<dbReference type="Pfam" id="PF05173">
    <property type="entry name" value="DapB_C"/>
    <property type="match status" value="1"/>
</dbReference>
<dbReference type="Pfam" id="PF01113">
    <property type="entry name" value="DapB_N"/>
    <property type="match status" value="1"/>
</dbReference>
<dbReference type="PIRSF" id="PIRSF000161">
    <property type="entry name" value="DHPR"/>
    <property type="match status" value="1"/>
</dbReference>
<dbReference type="SUPFAM" id="SSF55347">
    <property type="entry name" value="Glyceraldehyde-3-phosphate dehydrogenase-like, C-terminal domain"/>
    <property type="match status" value="1"/>
</dbReference>
<dbReference type="SUPFAM" id="SSF51735">
    <property type="entry name" value="NAD(P)-binding Rossmann-fold domains"/>
    <property type="match status" value="1"/>
</dbReference>
<dbReference type="PROSITE" id="PS01298">
    <property type="entry name" value="DAPB"/>
    <property type="match status" value="1"/>
</dbReference>
<name>DAPB_CAMHC</name>
<organism>
    <name type="scientific">Campylobacter hominis (strain ATCC BAA-381 / DSM 21671 / CCUG 45161 / LMG 19568 / NCTC 13146 / CH001A)</name>
    <dbReference type="NCBI Taxonomy" id="360107"/>
    <lineage>
        <taxon>Bacteria</taxon>
        <taxon>Pseudomonadati</taxon>
        <taxon>Campylobacterota</taxon>
        <taxon>Epsilonproteobacteria</taxon>
        <taxon>Campylobacterales</taxon>
        <taxon>Campylobacteraceae</taxon>
        <taxon>Campylobacter</taxon>
    </lineage>
</organism>
<feature type="chain" id="PRO_1000008552" description="4-hydroxy-tetrahydrodipicolinate reductase">
    <location>
        <begin position="1"/>
        <end position="258"/>
    </location>
</feature>
<feature type="active site" description="Proton donor/acceptor" evidence="1">
    <location>
        <position position="142"/>
    </location>
</feature>
<feature type="active site" description="Proton donor" evidence="1">
    <location>
        <position position="146"/>
    </location>
</feature>
<feature type="binding site" evidence="1">
    <location>
        <begin position="8"/>
        <end position="13"/>
    </location>
    <ligand>
        <name>NAD(+)</name>
        <dbReference type="ChEBI" id="CHEBI:57540"/>
    </ligand>
</feature>
<feature type="binding site" evidence="1">
    <location>
        <begin position="86"/>
        <end position="88"/>
    </location>
    <ligand>
        <name>NAD(+)</name>
        <dbReference type="ChEBI" id="CHEBI:57540"/>
    </ligand>
</feature>
<feature type="binding site" evidence="1">
    <location>
        <begin position="110"/>
        <end position="113"/>
    </location>
    <ligand>
        <name>NAD(+)</name>
        <dbReference type="ChEBI" id="CHEBI:57540"/>
    </ligand>
</feature>
<feature type="binding site" evidence="1">
    <location>
        <position position="143"/>
    </location>
    <ligand>
        <name>(S)-2,3,4,5-tetrahydrodipicolinate</name>
        <dbReference type="ChEBI" id="CHEBI:16845"/>
    </ligand>
</feature>
<feature type="binding site" evidence="1">
    <location>
        <begin position="152"/>
        <end position="153"/>
    </location>
    <ligand>
        <name>(S)-2,3,4,5-tetrahydrodipicolinate</name>
        <dbReference type="ChEBI" id="CHEBI:16845"/>
    </ligand>
</feature>
<proteinExistence type="inferred from homology"/>
<protein>
    <recommendedName>
        <fullName evidence="1">4-hydroxy-tetrahydrodipicolinate reductase</fullName>
        <shortName evidence="1">HTPA reductase</shortName>
        <ecNumber evidence="1">1.17.1.8</ecNumber>
    </recommendedName>
</protein>
<keyword id="KW-0028">Amino-acid biosynthesis</keyword>
<keyword id="KW-0963">Cytoplasm</keyword>
<keyword id="KW-0220">Diaminopimelate biosynthesis</keyword>
<keyword id="KW-0457">Lysine biosynthesis</keyword>
<keyword id="KW-0520">NAD</keyword>
<keyword id="KW-0521">NADP</keyword>
<keyword id="KW-0560">Oxidoreductase</keyword>
<keyword id="KW-1185">Reference proteome</keyword>
<accession>A7I316</accession>
<comment type="function">
    <text evidence="1">Catalyzes the conversion of 4-hydroxy-tetrahydrodipicolinate (HTPA) to tetrahydrodipicolinate.</text>
</comment>
<comment type="catalytic activity">
    <reaction evidence="1">
        <text>(S)-2,3,4,5-tetrahydrodipicolinate + NAD(+) + H2O = (2S,4S)-4-hydroxy-2,3,4,5-tetrahydrodipicolinate + NADH + H(+)</text>
        <dbReference type="Rhea" id="RHEA:35323"/>
        <dbReference type="ChEBI" id="CHEBI:15377"/>
        <dbReference type="ChEBI" id="CHEBI:15378"/>
        <dbReference type="ChEBI" id="CHEBI:16845"/>
        <dbReference type="ChEBI" id="CHEBI:57540"/>
        <dbReference type="ChEBI" id="CHEBI:57945"/>
        <dbReference type="ChEBI" id="CHEBI:67139"/>
        <dbReference type="EC" id="1.17.1.8"/>
    </reaction>
</comment>
<comment type="catalytic activity">
    <reaction evidence="1">
        <text>(S)-2,3,4,5-tetrahydrodipicolinate + NADP(+) + H2O = (2S,4S)-4-hydroxy-2,3,4,5-tetrahydrodipicolinate + NADPH + H(+)</text>
        <dbReference type="Rhea" id="RHEA:35331"/>
        <dbReference type="ChEBI" id="CHEBI:15377"/>
        <dbReference type="ChEBI" id="CHEBI:15378"/>
        <dbReference type="ChEBI" id="CHEBI:16845"/>
        <dbReference type="ChEBI" id="CHEBI:57783"/>
        <dbReference type="ChEBI" id="CHEBI:58349"/>
        <dbReference type="ChEBI" id="CHEBI:67139"/>
        <dbReference type="EC" id="1.17.1.8"/>
    </reaction>
</comment>
<comment type="pathway">
    <text evidence="1">Amino-acid biosynthesis; L-lysine biosynthesis via DAP pathway; (S)-tetrahydrodipicolinate from L-aspartate: step 4/4.</text>
</comment>
<comment type="subcellular location">
    <subcellularLocation>
        <location evidence="1">Cytoplasm</location>
    </subcellularLocation>
</comment>
<comment type="similarity">
    <text evidence="1">Belongs to the DapB family.</text>
</comment>
<comment type="caution">
    <text evidence="2">Was originally thought to be a dihydrodipicolinate reductase (DHDPR), catalyzing the conversion of dihydrodipicolinate to tetrahydrodipicolinate. However, it was shown in E.coli that the substrate of the enzymatic reaction is not dihydrodipicolinate (DHDP) but in fact (2S,4S)-4-hydroxy-2,3,4,5-tetrahydrodipicolinic acid (HTPA), the product released by the DapA-catalyzed reaction.</text>
</comment>